<comment type="function">
    <text evidence="1">One of the primary rRNA binding proteins, it binds directly near the 3'-end of the 23S rRNA, where it nucleates assembly of the 50S subunit.</text>
</comment>
<comment type="subunit">
    <text evidence="1">Part of the 50S ribosomal subunit. Forms a cluster with proteins L14 and L19.</text>
</comment>
<comment type="PTM">
    <text evidence="1">Methylated by PrmB.</text>
</comment>
<comment type="similarity">
    <text evidence="1">Belongs to the universal ribosomal protein uL3 family.</text>
</comment>
<keyword id="KW-0488">Methylation</keyword>
<keyword id="KW-0687">Ribonucleoprotein</keyword>
<keyword id="KW-0689">Ribosomal protein</keyword>
<keyword id="KW-0694">RNA-binding</keyword>
<keyword id="KW-0699">rRNA-binding</keyword>
<sequence>MTKKYSLGFVGRKAGMSRVFTEDGRSVPVTLIEATPNRIAQIKTVEVDGYSAVQITVGARRAALVNKPAAGHFAKAKVEAGRGLWEFRVEDAQLGDFAVGGEIKADIFEVGQKVDVQGVTKGKGFQGTIKRYNFRMGDATHGNSLSHRAPGSLGQRQTPGRVFPGKKMSGHMGAVQQSTQNLEVVKVDVERGLIAIRGAVPGAAGGDVIVRPASKA</sequence>
<reference key="1">
    <citation type="journal article" date="2008" name="J. Biotechnol.">
        <title>The genome of Xanthomonas campestris pv. campestris B100 and its use for the reconstruction of metabolic pathways involved in xanthan biosynthesis.</title>
        <authorList>
            <person name="Vorhoelter F.-J."/>
            <person name="Schneiker S."/>
            <person name="Goesmann A."/>
            <person name="Krause L."/>
            <person name="Bekel T."/>
            <person name="Kaiser O."/>
            <person name="Linke B."/>
            <person name="Patschkowski T."/>
            <person name="Rueckert C."/>
            <person name="Schmid J."/>
            <person name="Sidhu V.K."/>
            <person name="Sieber V."/>
            <person name="Tauch A."/>
            <person name="Watt S.A."/>
            <person name="Weisshaar B."/>
            <person name="Becker A."/>
            <person name="Niehaus K."/>
            <person name="Puehler A."/>
        </authorList>
    </citation>
    <scope>NUCLEOTIDE SEQUENCE [LARGE SCALE GENOMIC DNA]</scope>
    <source>
        <strain>B100</strain>
    </source>
</reference>
<evidence type="ECO:0000255" key="1">
    <source>
        <dbReference type="HAMAP-Rule" id="MF_01325"/>
    </source>
</evidence>
<evidence type="ECO:0000305" key="2"/>
<protein>
    <recommendedName>
        <fullName evidence="1">Large ribosomal subunit protein uL3</fullName>
    </recommendedName>
    <alternativeName>
        <fullName evidence="2">50S ribosomal protein L3</fullName>
    </alternativeName>
</protein>
<feature type="chain" id="PRO_1000141942" description="Large ribosomal subunit protein uL3">
    <location>
        <begin position="1"/>
        <end position="216"/>
    </location>
</feature>
<feature type="modified residue" description="N5-methylglutamine" evidence="1">
    <location>
        <position position="157"/>
    </location>
</feature>
<gene>
    <name evidence="1" type="primary">rplC</name>
    <name type="ordered locus">xcc-b100_3459</name>
</gene>
<organism>
    <name type="scientific">Xanthomonas campestris pv. campestris (strain B100)</name>
    <dbReference type="NCBI Taxonomy" id="509169"/>
    <lineage>
        <taxon>Bacteria</taxon>
        <taxon>Pseudomonadati</taxon>
        <taxon>Pseudomonadota</taxon>
        <taxon>Gammaproteobacteria</taxon>
        <taxon>Lysobacterales</taxon>
        <taxon>Lysobacteraceae</taxon>
        <taxon>Xanthomonas</taxon>
    </lineage>
</organism>
<proteinExistence type="inferred from homology"/>
<accession>B0RU82</accession>
<dbReference type="EMBL" id="AM920689">
    <property type="protein sequence ID" value="CAP52824.1"/>
    <property type="molecule type" value="Genomic_DNA"/>
</dbReference>
<dbReference type="SMR" id="B0RU82"/>
<dbReference type="KEGG" id="xca:xcc-b100_3459"/>
<dbReference type="HOGENOM" id="CLU_044142_4_1_6"/>
<dbReference type="Proteomes" id="UP000001188">
    <property type="component" value="Chromosome"/>
</dbReference>
<dbReference type="GO" id="GO:0022625">
    <property type="term" value="C:cytosolic large ribosomal subunit"/>
    <property type="evidence" value="ECO:0007669"/>
    <property type="project" value="TreeGrafter"/>
</dbReference>
<dbReference type="GO" id="GO:0019843">
    <property type="term" value="F:rRNA binding"/>
    <property type="evidence" value="ECO:0007669"/>
    <property type="project" value="UniProtKB-UniRule"/>
</dbReference>
<dbReference type="GO" id="GO:0003735">
    <property type="term" value="F:structural constituent of ribosome"/>
    <property type="evidence" value="ECO:0007669"/>
    <property type="project" value="InterPro"/>
</dbReference>
<dbReference type="GO" id="GO:0006412">
    <property type="term" value="P:translation"/>
    <property type="evidence" value="ECO:0007669"/>
    <property type="project" value="UniProtKB-UniRule"/>
</dbReference>
<dbReference type="FunFam" id="2.40.30.10:FF:000004">
    <property type="entry name" value="50S ribosomal protein L3"/>
    <property type="match status" value="1"/>
</dbReference>
<dbReference type="FunFam" id="3.30.160.810:FF:000001">
    <property type="entry name" value="50S ribosomal protein L3"/>
    <property type="match status" value="1"/>
</dbReference>
<dbReference type="Gene3D" id="3.30.160.810">
    <property type="match status" value="1"/>
</dbReference>
<dbReference type="Gene3D" id="2.40.30.10">
    <property type="entry name" value="Translation factors"/>
    <property type="match status" value="1"/>
</dbReference>
<dbReference type="HAMAP" id="MF_01325_B">
    <property type="entry name" value="Ribosomal_uL3_B"/>
    <property type="match status" value="1"/>
</dbReference>
<dbReference type="InterPro" id="IPR000597">
    <property type="entry name" value="Ribosomal_uL3"/>
</dbReference>
<dbReference type="InterPro" id="IPR019927">
    <property type="entry name" value="Ribosomal_uL3_bac/org-type"/>
</dbReference>
<dbReference type="InterPro" id="IPR019926">
    <property type="entry name" value="Ribosomal_uL3_CS"/>
</dbReference>
<dbReference type="InterPro" id="IPR009000">
    <property type="entry name" value="Transl_B-barrel_sf"/>
</dbReference>
<dbReference type="NCBIfam" id="TIGR03625">
    <property type="entry name" value="L3_bact"/>
    <property type="match status" value="1"/>
</dbReference>
<dbReference type="PANTHER" id="PTHR11229">
    <property type="entry name" value="50S RIBOSOMAL PROTEIN L3"/>
    <property type="match status" value="1"/>
</dbReference>
<dbReference type="PANTHER" id="PTHR11229:SF16">
    <property type="entry name" value="LARGE RIBOSOMAL SUBUNIT PROTEIN UL3C"/>
    <property type="match status" value="1"/>
</dbReference>
<dbReference type="Pfam" id="PF00297">
    <property type="entry name" value="Ribosomal_L3"/>
    <property type="match status" value="1"/>
</dbReference>
<dbReference type="SUPFAM" id="SSF50447">
    <property type="entry name" value="Translation proteins"/>
    <property type="match status" value="1"/>
</dbReference>
<dbReference type="PROSITE" id="PS00474">
    <property type="entry name" value="RIBOSOMAL_L3"/>
    <property type="match status" value="1"/>
</dbReference>
<name>RL3_XANCB</name>